<keyword id="KW-0963">Cytoplasm</keyword>
<keyword id="KW-1185">Reference proteome</keyword>
<gene>
    <name type="ordered locus">HI_0839</name>
</gene>
<dbReference type="EMBL" id="L42023">
    <property type="protein sequence ID" value="AAC22497.1"/>
    <property type="status" value="ALT_INIT"/>
    <property type="molecule type" value="Genomic_DNA"/>
</dbReference>
<dbReference type="PIR" id="D64159">
    <property type="entry name" value="D64159"/>
</dbReference>
<dbReference type="RefSeq" id="NP_438999.2">
    <property type="nucleotide sequence ID" value="NC_000907.1"/>
</dbReference>
<dbReference type="SMR" id="P44896"/>
<dbReference type="STRING" id="71421.HI_0839"/>
<dbReference type="EnsemblBacteria" id="AAC22497">
    <property type="protein sequence ID" value="AAC22497"/>
    <property type="gene ID" value="HI_0839"/>
</dbReference>
<dbReference type="KEGG" id="hin:HI_0839"/>
<dbReference type="PATRIC" id="fig|71421.8.peg.880"/>
<dbReference type="eggNOG" id="COG3081">
    <property type="taxonomic scope" value="Bacteria"/>
</dbReference>
<dbReference type="HOGENOM" id="CLU_063050_0_1_6"/>
<dbReference type="OrthoDB" id="9131762at2"/>
<dbReference type="PhylomeDB" id="P44896"/>
<dbReference type="BioCyc" id="HINF71421:G1GJ1-880-MONOMER"/>
<dbReference type="Proteomes" id="UP000000579">
    <property type="component" value="Chromosome"/>
</dbReference>
<dbReference type="GO" id="GO:0043590">
    <property type="term" value="C:bacterial nucleoid"/>
    <property type="evidence" value="ECO:0000318"/>
    <property type="project" value="GO_Central"/>
</dbReference>
<dbReference type="GO" id="GO:0005737">
    <property type="term" value="C:cytoplasm"/>
    <property type="evidence" value="ECO:0007669"/>
    <property type="project" value="UniProtKB-UniRule"/>
</dbReference>
<dbReference type="GO" id="GO:0003690">
    <property type="term" value="F:double-stranded DNA binding"/>
    <property type="evidence" value="ECO:0000318"/>
    <property type="project" value="GO_Central"/>
</dbReference>
<dbReference type="GO" id="GO:0003727">
    <property type="term" value="F:single-stranded RNA binding"/>
    <property type="evidence" value="ECO:0000318"/>
    <property type="project" value="GO_Central"/>
</dbReference>
<dbReference type="HAMAP" id="MF_00730">
    <property type="entry name" value="NdpA"/>
    <property type="match status" value="1"/>
</dbReference>
<dbReference type="InterPro" id="IPR007358">
    <property type="entry name" value="Nucleoid_associated_NdpA"/>
</dbReference>
<dbReference type="NCBIfam" id="NF001557">
    <property type="entry name" value="PRK00378.1"/>
    <property type="match status" value="1"/>
</dbReference>
<dbReference type="PANTHER" id="PTHR38772">
    <property type="match status" value="1"/>
</dbReference>
<dbReference type="PANTHER" id="PTHR38772:SF1">
    <property type="entry name" value="NUCLEOID-ASSOCIATED PROTEIN YEJK"/>
    <property type="match status" value="1"/>
</dbReference>
<dbReference type="Pfam" id="PF04245">
    <property type="entry name" value="NA37"/>
    <property type="match status" value="1"/>
</dbReference>
<comment type="subcellular location">
    <subcellularLocation>
        <location evidence="1">Cytoplasm</location>
        <location evidence="1">Nucleoid</location>
    </subcellularLocation>
</comment>
<comment type="similarity">
    <text evidence="2">Belongs to the YejK family.</text>
</comment>
<comment type="sequence caution" evidence="2">
    <conflict type="erroneous initiation">
        <sequence resource="EMBL-CDS" id="AAC22497"/>
    </conflict>
    <text>Extended N-terminus.</text>
</comment>
<protein>
    <recommendedName>
        <fullName>Nucleoid-associated protein HI_0839</fullName>
    </recommendedName>
</protein>
<accession>P44896</accession>
<reference key="1">
    <citation type="journal article" date="1995" name="Science">
        <title>Whole-genome random sequencing and assembly of Haemophilus influenzae Rd.</title>
        <authorList>
            <person name="Fleischmann R.D."/>
            <person name="Adams M.D."/>
            <person name="White O."/>
            <person name="Clayton R.A."/>
            <person name="Kirkness E.F."/>
            <person name="Kerlavage A.R."/>
            <person name="Bult C.J."/>
            <person name="Tomb J.-F."/>
            <person name="Dougherty B.A."/>
            <person name="Merrick J.M."/>
            <person name="McKenney K."/>
            <person name="Sutton G.G."/>
            <person name="FitzHugh W."/>
            <person name="Fields C.A."/>
            <person name="Gocayne J.D."/>
            <person name="Scott J.D."/>
            <person name="Shirley R."/>
            <person name="Liu L.-I."/>
            <person name="Glodek A."/>
            <person name="Kelley J.M."/>
            <person name="Weidman J.F."/>
            <person name="Phillips C.A."/>
            <person name="Spriggs T."/>
            <person name="Hedblom E."/>
            <person name="Cotton M.D."/>
            <person name="Utterback T.R."/>
            <person name="Hanna M.C."/>
            <person name="Nguyen D.T."/>
            <person name="Saudek D.M."/>
            <person name="Brandon R.C."/>
            <person name="Fine L.D."/>
            <person name="Fritchman J.L."/>
            <person name="Fuhrmann J.L."/>
            <person name="Geoghagen N.S.M."/>
            <person name="Gnehm C.L."/>
            <person name="McDonald L.A."/>
            <person name="Small K.V."/>
            <person name="Fraser C.M."/>
            <person name="Smith H.O."/>
            <person name="Venter J.C."/>
        </authorList>
    </citation>
    <scope>NUCLEOTIDE SEQUENCE [LARGE SCALE GENOMIC DNA]</scope>
    <source>
        <strain>ATCC 51907 / DSM 11121 / KW20 / Rd</strain>
    </source>
</reference>
<organism>
    <name type="scientific">Haemophilus influenzae (strain ATCC 51907 / DSM 11121 / KW20 / Rd)</name>
    <dbReference type="NCBI Taxonomy" id="71421"/>
    <lineage>
        <taxon>Bacteria</taxon>
        <taxon>Pseudomonadati</taxon>
        <taxon>Pseudomonadota</taxon>
        <taxon>Gammaproteobacteria</taxon>
        <taxon>Pasteurellales</taxon>
        <taxon>Pasteurellaceae</taxon>
        <taxon>Haemophilus</taxon>
    </lineage>
</organism>
<sequence>MSITVNQTVLHQLVKNVDGDSIKMESVLRDELLSITPEVEQMMLQLHQSYQNKAKAFGVFQEKSIFAQHLNRLLEQEIEFLGFSQYSTKLLADELGKYNFAESGTLILCQYNFLATDYLFIALLDSRHSMLVDEHLDIRRTEYLDITQFDIAARINLTDLQVNANSNRYLTFIKGRVGRKISDFFMDFLGAEEGLNPQVQNQCLLQAVSDYCDQGELNKEQTQAVKKQVFEYCKGQLSNGNNIELRELSDSLPTLNEQPFVVFTEKQNYGLEESIPPIRSTLKSLTKFSGSGKGVTLSFDAELLNTRIQWDPMTDTLTIKGLPPNLKDQLQKALKSEN</sequence>
<evidence type="ECO:0000250" key="1"/>
<evidence type="ECO:0000305" key="2"/>
<proteinExistence type="inferred from homology"/>
<name>NDPA_HAEIN</name>
<feature type="chain" id="PRO_0000210908" description="Nucleoid-associated protein HI_0839">
    <location>
        <begin position="1"/>
        <end position="338"/>
    </location>
</feature>